<keyword id="KW-0414">Isoprene biosynthesis</keyword>
<keyword id="KW-0456">Lyase</keyword>
<keyword id="KW-0479">Metal-binding</keyword>
<keyword id="KW-1185">Reference proteome</keyword>
<feature type="chain" id="PRO_0000189442" description="2-C-methyl-D-erythritol 2,4-cyclodiphosphate synthase">
    <location>
        <begin position="1"/>
        <end position="159"/>
    </location>
</feature>
<feature type="binding site" evidence="1">
    <location>
        <begin position="10"/>
        <end position="12"/>
    </location>
    <ligand>
        <name>4-CDP-2-C-methyl-D-erythritol 2-phosphate</name>
        <dbReference type="ChEBI" id="CHEBI:57919"/>
    </ligand>
</feature>
<feature type="binding site" evidence="1">
    <location>
        <position position="10"/>
    </location>
    <ligand>
        <name>a divalent metal cation</name>
        <dbReference type="ChEBI" id="CHEBI:60240"/>
    </ligand>
</feature>
<feature type="binding site" evidence="1">
    <location>
        <position position="12"/>
    </location>
    <ligand>
        <name>a divalent metal cation</name>
        <dbReference type="ChEBI" id="CHEBI:60240"/>
    </ligand>
</feature>
<feature type="binding site" evidence="1">
    <location>
        <begin position="36"/>
        <end position="37"/>
    </location>
    <ligand>
        <name>4-CDP-2-C-methyl-D-erythritol 2-phosphate</name>
        <dbReference type="ChEBI" id="CHEBI:57919"/>
    </ligand>
</feature>
<feature type="binding site" evidence="1">
    <location>
        <position position="44"/>
    </location>
    <ligand>
        <name>a divalent metal cation</name>
        <dbReference type="ChEBI" id="CHEBI:60240"/>
    </ligand>
</feature>
<feature type="binding site" evidence="1">
    <location>
        <begin position="58"/>
        <end position="60"/>
    </location>
    <ligand>
        <name>4-CDP-2-C-methyl-D-erythritol 2-phosphate</name>
        <dbReference type="ChEBI" id="CHEBI:57919"/>
    </ligand>
</feature>
<feature type="binding site" evidence="1">
    <location>
        <begin position="134"/>
        <end position="137"/>
    </location>
    <ligand>
        <name>4-CDP-2-C-methyl-D-erythritol 2-phosphate</name>
        <dbReference type="ChEBI" id="CHEBI:57919"/>
    </ligand>
</feature>
<feature type="binding site" evidence="1">
    <location>
        <position position="141"/>
    </location>
    <ligand>
        <name>4-CDP-2-C-methyl-D-erythritol 2-phosphate</name>
        <dbReference type="ChEBI" id="CHEBI:57919"/>
    </ligand>
</feature>
<feature type="binding site" evidence="1">
    <location>
        <position position="144"/>
    </location>
    <ligand>
        <name>4-CDP-2-C-methyl-D-erythritol 2-phosphate</name>
        <dbReference type="ChEBI" id="CHEBI:57919"/>
    </ligand>
</feature>
<feature type="site" description="Transition state stabilizer" evidence="1">
    <location>
        <position position="36"/>
    </location>
</feature>
<feature type="site" description="Transition state stabilizer" evidence="1">
    <location>
        <position position="135"/>
    </location>
</feature>
<gene>
    <name evidence="1" type="primary">ispF</name>
    <name type="ordered locus">BT_3884</name>
</gene>
<evidence type="ECO:0000255" key="1">
    <source>
        <dbReference type="HAMAP-Rule" id="MF_00107"/>
    </source>
</evidence>
<name>ISPF_BACTN</name>
<protein>
    <recommendedName>
        <fullName evidence="1">2-C-methyl-D-erythritol 2,4-cyclodiphosphate synthase</fullName>
        <shortName evidence="1">MECDP-synthase</shortName>
        <shortName evidence="1">MECPP-synthase</shortName>
        <shortName evidence="1">MECPS</shortName>
        <ecNumber evidence="1">4.6.1.12</ecNumber>
    </recommendedName>
</protein>
<reference key="1">
    <citation type="journal article" date="2003" name="Science">
        <title>A genomic view of the human-Bacteroides thetaiotaomicron symbiosis.</title>
        <authorList>
            <person name="Xu J."/>
            <person name="Bjursell M.K."/>
            <person name="Himrod J."/>
            <person name="Deng S."/>
            <person name="Carmichael L.K."/>
            <person name="Chiang H.C."/>
            <person name="Hooper L.V."/>
            <person name="Gordon J.I."/>
        </authorList>
    </citation>
    <scope>NUCLEOTIDE SEQUENCE [LARGE SCALE GENOMIC DNA]</scope>
    <source>
        <strain>ATCC 29148 / DSM 2079 / JCM 5827 / CCUG 10774 / NCTC 10582 / VPI-5482 / E50</strain>
    </source>
</reference>
<dbReference type="EC" id="4.6.1.12" evidence="1"/>
<dbReference type="EMBL" id="AE015928">
    <property type="protein sequence ID" value="AAO78989.1"/>
    <property type="molecule type" value="Genomic_DNA"/>
</dbReference>
<dbReference type="RefSeq" id="NP_812795.1">
    <property type="nucleotide sequence ID" value="NC_004663.1"/>
</dbReference>
<dbReference type="RefSeq" id="WP_008764145.1">
    <property type="nucleotide sequence ID" value="NC_004663.1"/>
</dbReference>
<dbReference type="SMR" id="Q8A0Y7"/>
<dbReference type="FunCoup" id="Q8A0Y7">
    <property type="interactions" value="350"/>
</dbReference>
<dbReference type="STRING" id="226186.BT_3884"/>
<dbReference type="PaxDb" id="226186-BT_3884"/>
<dbReference type="EnsemblBacteria" id="AAO78989">
    <property type="protein sequence ID" value="AAO78989"/>
    <property type="gene ID" value="BT_3884"/>
</dbReference>
<dbReference type="GeneID" id="60925058"/>
<dbReference type="KEGG" id="bth:BT_3884"/>
<dbReference type="PATRIC" id="fig|226186.12.peg.3949"/>
<dbReference type="eggNOG" id="COG0245">
    <property type="taxonomic scope" value="Bacteria"/>
</dbReference>
<dbReference type="HOGENOM" id="CLU_084630_2_0_10"/>
<dbReference type="InParanoid" id="Q8A0Y7"/>
<dbReference type="OrthoDB" id="9804336at2"/>
<dbReference type="UniPathway" id="UPA00056">
    <property type="reaction ID" value="UER00095"/>
</dbReference>
<dbReference type="Proteomes" id="UP000001414">
    <property type="component" value="Chromosome"/>
</dbReference>
<dbReference type="GO" id="GO:0008685">
    <property type="term" value="F:2-C-methyl-D-erythritol 2,4-cyclodiphosphate synthase activity"/>
    <property type="evidence" value="ECO:0000318"/>
    <property type="project" value="GO_Central"/>
</dbReference>
<dbReference type="GO" id="GO:0046872">
    <property type="term" value="F:metal ion binding"/>
    <property type="evidence" value="ECO:0007669"/>
    <property type="project" value="UniProtKB-KW"/>
</dbReference>
<dbReference type="GO" id="GO:0019288">
    <property type="term" value="P:isopentenyl diphosphate biosynthetic process, methylerythritol 4-phosphate pathway"/>
    <property type="evidence" value="ECO:0007669"/>
    <property type="project" value="UniProtKB-UniRule"/>
</dbReference>
<dbReference type="GO" id="GO:0016114">
    <property type="term" value="P:terpenoid biosynthetic process"/>
    <property type="evidence" value="ECO:0007669"/>
    <property type="project" value="InterPro"/>
</dbReference>
<dbReference type="CDD" id="cd00554">
    <property type="entry name" value="MECDP_synthase"/>
    <property type="match status" value="1"/>
</dbReference>
<dbReference type="FunFam" id="3.30.1330.50:FF:000001">
    <property type="entry name" value="2-C-methyl-D-erythritol 2,4-cyclodiphosphate synthase"/>
    <property type="match status" value="1"/>
</dbReference>
<dbReference type="Gene3D" id="3.30.1330.50">
    <property type="entry name" value="2-C-methyl-D-erythritol 2,4-cyclodiphosphate synthase"/>
    <property type="match status" value="1"/>
</dbReference>
<dbReference type="HAMAP" id="MF_00107">
    <property type="entry name" value="IspF"/>
    <property type="match status" value="1"/>
</dbReference>
<dbReference type="InterPro" id="IPR003526">
    <property type="entry name" value="MECDP_synthase"/>
</dbReference>
<dbReference type="InterPro" id="IPR020555">
    <property type="entry name" value="MECDP_synthase_CS"/>
</dbReference>
<dbReference type="InterPro" id="IPR036571">
    <property type="entry name" value="MECDP_synthase_sf"/>
</dbReference>
<dbReference type="NCBIfam" id="TIGR00151">
    <property type="entry name" value="ispF"/>
    <property type="match status" value="1"/>
</dbReference>
<dbReference type="PANTHER" id="PTHR43181">
    <property type="entry name" value="2-C-METHYL-D-ERYTHRITOL 2,4-CYCLODIPHOSPHATE SYNTHASE, CHLOROPLASTIC"/>
    <property type="match status" value="1"/>
</dbReference>
<dbReference type="PANTHER" id="PTHR43181:SF1">
    <property type="entry name" value="2-C-METHYL-D-ERYTHRITOL 2,4-CYCLODIPHOSPHATE SYNTHASE, CHLOROPLASTIC"/>
    <property type="match status" value="1"/>
</dbReference>
<dbReference type="Pfam" id="PF02542">
    <property type="entry name" value="YgbB"/>
    <property type="match status" value="1"/>
</dbReference>
<dbReference type="SUPFAM" id="SSF69765">
    <property type="entry name" value="IpsF-like"/>
    <property type="match status" value="1"/>
</dbReference>
<dbReference type="PROSITE" id="PS01350">
    <property type="entry name" value="ISPF"/>
    <property type="match status" value="1"/>
</dbReference>
<proteinExistence type="inferred from homology"/>
<comment type="function">
    <text evidence="1">Involved in the biosynthesis of isopentenyl diphosphate (IPP) and dimethylallyl diphosphate (DMAPP), two major building blocks of isoprenoid compounds. Catalyzes the conversion of 4-diphosphocytidyl-2-C-methyl-D-erythritol 2-phosphate (CDP-ME2P) to 2-C-methyl-D-erythritol 2,4-cyclodiphosphate (ME-CPP) with a corresponding release of cytidine 5-monophosphate (CMP).</text>
</comment>
<comment type="catalytic activity">
    <reaction evidence="1">
        <text>4-CDP-2-C-methyl-D-erythritol 2-phosphate = 2-C-methyl-D-erythritol 2,4-cyclic diphosphate + CMP</text>
        <dbReference type="Rhea" id="RHEA:23864"/>
        <dbReference type="ChEBI" id="CHEBI:57919"/>
        <dbReference type="ChEBI" id="CHEBI:58483"/>
        <dbReference type="ChEBI" id="CHEBI:60377"/>
        <dbReference type="EC" id="4.6.1.12"/>
    </reaction>
</comment>
<comment type="cofactor">
    <cofactor evidence="1">
        <name>a divalent metal cation</name>
        <dbReference type="ChEBI" id="CHEBI:60240"/>
    </cofactor>
    <text evidence="1">Binds 1 divalent metal cation per subunit.</text>
</comment>
<comment type="pathway">
    <text evidence="1">Isoprenoid biosynthesis; isopentenyl diphosphate biosynthesis via DXP pathway; isopentenyl diphosphate from 1-deoxy-D-xylulose 5-phosphate: step 4/6.</text>
</comment>
<comment type="subunit">
    <text evidence="1">Homotrimer.</text>
</comment>
<comment type="similarity">
    <text evidence="1">Belongs to the IspF family.</text>
</comment>
<accession>Q8A0Y7</accession>
<sequence>MKIRVGFGFDVHQLVEGRELWLGGIRLEHSKGLLGHSDADVLLHTVCDALLGAANMRDIGYHFPDTAGEYKNIDSKILLKKTVELIATKGYRVGNIDATICAERPKLKAHIPLMQETMAAVMGIDAEDISIKATTTEKLGFTGREEGISAYATVLIEKD</sequence>
<organism>
    <name type="scientific">Bacteroides thetaiotaomicron (strain ATCC 29148 / DSM 2079 / JCM 5827 / CCUG 10774 / NCTC 10582 / VPI-5482 / E50)</name>
    <dbReference type="NCBI Taxonomy" id="226186"/>
    <lineage>
        <taxon>Bacteria</taxon>
        <taxon>Pseudomonadati</taxon>
        <taxon>Bacteroidota</taxon>
        <taxon>Bacteroidia</taxon>
        <taxon>Bacteroidales</taxon>
        <taxon>Bacteroidaceae</taxon>
        <taxon>Bacteroides</taxon>
    </lineage>
</organism>